<gene>
    <name type="primary">Slc25a33</name>
</gene>
<reference key="1">
    <citation type="journal article" date="2005" name="Science">
        <title>The transcriptional landscape of the mammalian genome.</title>
        <authorList>
            <person name="Carninci P."/>
            <person name="Kasukawa T."/>
            <person name="Katayama S."/>
            <person name="Gough J."/>
            <person name="Frith M.C."/>
            <person name="Maeda N."/>
            <person name="Oyama R."/>
            <person name="Ravasi T."/>
            <person name="Lenhard B."/>
            <person name="Wells C."/>
            <person name="Kodzius R."/>
            <person name="Shimokawa K."/>
            <person name="Bajic V.B."/>
            <person name="Brenner S.E."/>
            <person name="Batalov S."/>
            <person name="Forrest A.R."/>
            <person name="Zavolan M."/>
            <person name="Davis M.J."/>
            <person name="Wilming L.G."/>
            <person name="Aidinis V."/>
            <person name="Allen J.E."/>
            <person name="Ambesi-Impiombato A."/>
            <person name="Apweiler R."/>
            <person name="Aturaliya R.N."/>
            <person name="Bailey T.L."/>
            <person name="Bansal M."/>
            <person name="Baxter L."/>
            <person name="Beisel K.W."/>
            <person name="Bersano T."/>
            <person name="Bono H."/>
            <person name="Chalk A.M."/>
            <person name="Chiu K.P."/>
            <person name="Choudhary V."/>
            <person name="Christoffels A."/>
            <person name="Clutterbuck D.R."/>
            <person name="Crowe M.L."/>
            <person name="Dalla E."/>
            <person name="Dalrymple B.P."/>
            <person name="de Bono B."/>
            <person name="Della Gatta G."/>
            <person name="di Bernardo D."/>
            <person name="Down T."/>
            <person name="Engstrom P."/>
            <person name="Fagiolini M."/>
            <person name="Faulkner G."/>
            <person name="Fletcher C.F."/>
            <person name="Fukushima T."/>
            <person name="Furuno M."/>
            <person name="Futaki S."/>
            <person name="Gariboldi M."/>
            <person name="Georgii-Hemming P."/>
            <person name="Gingeras T.R."/>
            <person name="Gojobori T."/>
            <person name="Green R.E."/>
            <person name="Gustincich S."/>
            <person name="Harbers M."/>
            <person name="Hayashi Y."/>
            <person name="Hensch T.K."/>
            <person name="Hirokawa N."/>
            <person name="Hill D."/>
            <person name="Huminiecki L."/>
            <person name="Iacono M."/>
            <person name="Ikeo K."/>
            <person name="Iwama A."/>
            <person name="Ishikawa T."/>
            <person name="Jakt M."/>
            <person name="Kanapin A."/>
            <person name="Katoh M."/>
            <person name="Kawasawa Y."/>
            <person name="Kelso J."/>
            <person name="Kitamura H."/>
            <person name="Kitano H."/>
            <person name="Kollias G."/>
            <person name="Krishnan S.P."/>
            <person name="Kruger A."/>
            <person name="Kummerfeld S.K."/>
            <person name="Kurochkin I.V."/>
            <person name="Lareau L.F."/>
            <person name="Lazarevic D."/>
            <person name="Lipovich L."/>
            <person name="Liu J."/>
            <person name="Liuni S."/>
            <person name="McWilliam S."/>
            <person name="Madan Babu M."/>
            <person name="Madera M."/>
            <person name="Marchionni L."/>
            <person name="Matsuda H."/>
            <person name="Matsuzawa S."/>
            <person name="Miki H."/>
            <person name="Mignone F."/>
            <person name="Miyake S."/>
            <person name="Morris K."/>
            <person name="Mottagui-Tabar S."/>
            <person name="Mulder N."/>
            <person name="Nakano N."/>
            <person name="Nakauchi H."/>
            <person name="Ng P."/>
            <person name="Nilsson R."/>
            <person name="Nishiguchi S."/>
            <person name="Nishikawa S."/>
            <person name="Nori F."/>
            <person name="Ohara O."/>
            <person name="Okazaki Y."/>
            <person name="Orlando V."/>
            <person name="Pang K.C."/>
            <person name="Pavan W.J."/>
            <person name="Pavesi G."/>
            <person name="Pesole G."/>
            <person name="Petrovsky N."/>
            <person name="Piazza S."/>
            <person name="Reed J."/>
            <person name="Reid J.F."/>
            <person name="Ring B.Z."/>
            <person name="Ringwald M."/>
            <person name="Rost B."/>
            <person name="Ruan Y."/>
            <person name="Salzberg S.L."/>
            <person name="Sandelin A."/>
            <person name="Schneider C."/>
            <person name="Schoenbach C."/>
            <person name="Sekiguchi K."/>
            <person name="Semple C.A."/>
            <person name="Seno S."/>
            <person name="Sessa L."/>
            <person name="Sheng Y."/>
            <person name="Shibata Y."/>
            <person name="Shimada H."/>
            <person name="Shimada K."/>
            <person name="Silva D."/>
            <person name="Sinclair B."/>
            <person name="Sperling S."/>
            <person name="Stupka E."/>
            <person name="Sugiura K."/>
            <person name="Sultana R."/>
            <person name="Takenaka Y."/>
            <person name="Taki K."/>
            <person name="Tammoja K."/>
            <person name="Tan S.L."/>
            <person name="Tang S."/>
            <person name="Taylor M.S."/>
            <person name="Tegner J."/>
            <person name="Teichmann S.A."/>
            <person name="Ueda H.R."/>
            <person name="van Nimwegen E."/>
            <person name="Verardo R."/>
            <person name="Wei C.L."/>
            <person name="Yagi K."/>
            <person name="Yamanishi H."/>
            <person name="Zabarovsky E."/>
            <person name="Zhu S."/>
            <person name="Zimmer A."/>
            <person name="Hide W."/>
            <person name="Bult C."/>
            <person name="Grimmond S.M."/>
            <person name="Teasdale R.D."/>
            <person name="Liu E.T."/>
            <person name="Brusic V."/>
            <person name="Quackenbush J."/>
            <person name="Wahlestedt C."/>
            <person name="Mattick J.S."/>
            <person name="Hume D.A."/>
            <person name="Kai C."/>
            <person name="Sasaki D."/>
            <person name="Tomaru Y."/>
            <person name="Fukuda S."/>
            <person name="Kanamori-Katayama M."/>
            <person name="Suzuki M."/>
            <person name="Aoki J."/>
            <person name="Arakawa T."/>
            <person name="Iida J."/>
            <person name="Imamura K."/>
            <person name="Itoh M."/>
            <person name="Kato T."/>
            <person name="Kawaji H."/>
            <person name="Kawagashira N."/>
            <person name="Kawashima T."/>
            <person name="Kojima M."/>
            <person name="Kondo S."/>
            <person name="Konno H."/>
            <person name="Nakano K."/>
            <person name="Ninomiya N."/>
            <person name="Nishio T."/>
            <person name="Okada M."/>
            <person name="Plessy C."/>
            <person name="Shibata K."/>
            <person name="Shiraki T."/>
            <person name="Suzuki S."/>
            <person name="Tagami M."/>
            <person name="Waki K."/>
            <person name="Watahiki A."/>
            <person name="Okamura-Oho Y."/>
            <person name="Suzuki H."/>
            <person name="Kawai J."/>
            <person name="Hayashizaki Y."/>
        </authorList>
    </citation>
    <scope>NUCLEOTIDE SEQUENCE [LARGE SCALE MRNA]</scope>
    <source>
        <strain>C57BL/6J</strain>
        <strain>NOD</strain>
        <tissue>Spleen</tissue>
    </source>
</reference>
<reference key="2">
    <citation type="journal article" date="2009" name="PLoS Biol.">
        <title>Lineage-specific biology revealed by a finished genome assembly of the mouse.</title>
        <authorList>
            <person name="Church D.M."/>
            <person name="Goodstadt L."/>
            <person name="Hillier L.W."/>
            <person name="Zody M.C."/>
            <person name="Goldstein S."/>
            <person name="She X."/>
            <person name="Bult C.J."/>
            <person name="Agarwala R."/>
            <person name="Cherry J.L."/>
            <person name="DiCuccio M."/>
            <person name="Hlavina W."/>
            <person name="Kapustin Y."/>
            <person name="Meric P."/>
            <person name="Maglott D."/>
            <person name="Birtle Z."/>
            <person name="Marques A.C."/>
            <person name="Graves T."/>
            <person name="Zhou S."/>
            <person name="Teague B."/>
            <person name="Potamousis K."/>
            <person name="Churas C."/>
            <person name="Place M."/>
            <person name="Herschleb J."/>
            <person name="Runnheim R."/>
            <person name="Forrest D."/>
            <person name="Amos-Landgraf J."/>
            <person name="Schwartz D.C."/>
            <person name="Cheng Z."/>
            <person name="Lindblad-Toh K."/>
            <person name="Eichler E.E."/>
            <person name="Ponting C.P."/>
        </authorList>
    </citation>
    <scope>NUCLEOTIDE SEQUENCE [LARGE SCALE GENOMIC DNA]</scope>
    <source>
        <strain>C57BL/6J</strain>
    </source>
</reference>
<reference key="3">
    <citation type="journal article" date="2004" name="Genome Res.">
        <title>The status, quality, and expansion of the NIH full-length cDNA project: the Mammalian Gene Collection (MGC).</title>
        <authorList>
            <consortium name="The MGC Project Team"/>
        </authorList>
    </citation>
    <scope>NUCLEOTIDE SEQUENCE [LARGE SCALE MRNA]</scope>
    <source>
        <strain>Czech II</strain>
        <tissue>Mammary tumor</tissue>
    </source>
</reference>
<reference key="4">
    <citation type="journal article" date="2007" name="Mol. Biol. Cell">
        <title>The insulin-like growth factor-I-mTOR signaling pathway induces the mitochondrial pyrimidine nucleotide carrier to promote cell growth.</title>
        <authorList>
            <person name="Floyd S."/>
            <person name="Favre C."/>
            <person name="Lasorsa F.M."/>
            <person name="Leahy M."/>
            <person name="Trigiante G."/>
            <person name="Stroebel P."/>
            <person name="Marx A."/>
            <person name="Loughran G."/>
            <person name="O'Callaghan K."/>
            <person name="Marobbio C.M."/>
            <person name="Slotboom D.J."/>
            <person name="Kunji E.R."/>
            <person name="Palmieri F."/>
            <person name="O'Connor R."/>
        </authorList>
    </citation>
    <scope>SUBCELLULAR LOCATION</scope>
    <scope>FUNCTION</scope>
</reference>
<comment type="function">
    <text evidence="1 3">Mitochondrial transporter that imports/exports pyrimidine nucleotides into and from mitochondria. Selectively transports uridine, thymidine, guanosine, cytosine and inosine (deoxy)nucleoside di- and triphosphates by an antiport mechanism (By similarity). May import (deoxy)nucleoside triphosphates in exchange for intramitochondrial (deoxy)nucleoside diphosphates, thus providing precursors necessary for de novo synthesis of mitochondrial DNA and RNA while exporting products of their catabolism (By similarity). Participates in mitochondrial genome maintenance, regulation of mitochondrial membrane potential and mitochondrial respiration (By similarity). Upon INS or IGF1 stimulation regulates cell growth and proliferation by controlling mitochondrial DNA replication and transcription, the ratio of mitochondria-to nuclear-encoded components of the electron transport chain resulting in control of mitochondrial ROS production (PubMed:17596519). Participates in dendritic cell endocytosis and may associate with mitochondrial oxidative phosphorylation (By similarity).</text>
</comment>
<comment type="catalytic activity">
    <reaction evidence="1">
        <text>UTP(in) + UDP(out) = UTP(out) + UDP(in)</text>
        <dbReference type="Rhea" id="RHEA:73515"/>
        <dbReference type="ChEBI" id="CHEBI:46398"/>
        <dbReference type="ChEBI" id="CHEBI:58223"/>
    </reaction>
</comment>
<comment type="catalytic activity">
    <reaction evidence="1">
        <text>dUTP(out) + UTP(in) = dUTP(in) + UTP(out)</text>
        <dbReference type="Rhea" id="RHEA:73519"/>
        <dbReference type="ChEBI" id="CHEBI:46398"/>
        <dbReference type="ChEBI" id="CHEBI:61555"/>
    </reaction>
</comment>
<comment type="catalytic activity">
    <reaction evidence="1">
        <text>5-methyl-UTP(out) + UTP(in) = 5-methyl-UTP(in) + UTP(out)</text>
        <dbReference type="Rhea" id="RHEA:73523"/>
        <dbReference type="ChEBI" id="CHEBI:46398"/>
        <dbReference type="ChEBI" id="CHEBI:63527"/>
    </reaction>
</comment>
<comment type="catalytic activity">
    <reaction evidence="1">
        <text>5-methyl-UDP(out) + UTP(in) = 5-methyl-UDP(in) + UTP(out)</text>
        <dbReference type="Rhea" id="RHEA:73527"/>
        <dbReference type="ChEBI" id="CHEBI:46398"/>
        <dbReference type="ChEBI" id="CHEBI:61417"/>
    </reaction>
</comment>
<comment type="catalytic activity">
    <reaction evidence="1">
        <text>UTP(in) + CTP(out) = UTP(out) + CTP(in)</text>
        <dbReference type="Rhea" id="RHEA:73531"/>
        <dbReference type="ChEBI" id="CHEBI:37563"/>
        <dbReference type="ChEBI" id="CHEBI:46398"/>
    </reaction>
</comment>
<comment type="catalytic activity">
    <reaction evidence="1">
        <text>CDP(out) + UTP(in) = CDP(in) + UTP(out)</text>
        <dbReference type="Rhea" id="RHEA:73535"/>
        <dbReference type="ChEBI" id="CHEBI:46398"/>
        <dbReference type="ChEBI" id="CHEBI:58069"/>
    </reaction>
</comment>
<comment type="catalytic activity">
    <reaction evidence="1">
        <text>dCTP(out) + UTP(in) = dCTP(in) + UTP(out)</text>
        <dbReference type="Rhea" id="RHEA:73539"/>
        <dbReference type="ChEBI" id="CHEBI:46398"/>
        <dbReference type="ChEBI" id="CHEBI:61481"/>
    </reaction>
</comment>
<comment type="catalytic activity">
    <reaction evidence="1">
        <text>dCDP(out) + UTP(in) = dCDP(in) + UTP(out)</text>
        <dbReference type="Rhea" id="RHEA:73543"/>
        <dbReference type="ChEBI" id="CHEBI:46398"/>
        <dbReference type="ChEBI" id="CHEBI:58593"/>
    </reaction>
</comment>
<comment type="catalytic activity">
    <reaction evidence="1">
        <text>UTP(in) + GTP(out) = UTP(out) + GTP(in)</text>
        <dbReference type="Rhea" id="RHEA:73547"/>
        <dbReference type="ChEBI" id="CHEBI:37565"/>
        <dbReference type="ChEBI" id="CHEBI:46398"/>
    </reaction>
</comment>
<comment type="catalytic activity">
    <reaction evidence="1">
        <text>UTP(in) + GDP(out) = UTP(out) + GDP(in)</text>
        <dbReference type="Rhea" id="RHEA:73551"/>
        <dbReference type="ChEBI" id="CHEBI:46398"/>
        <dbReference type="ChEBI" id="CHEBI:58189"/>
    </reaction>
</comment>
<comment type="catalytic activity">
    <reaction evidence="1">
        <text>dGTP(out) + UTP(in) = dGTP(in) + UTP(out)</text>
        <dbReference type="Rhea" id="RHEA:73559"/>
        <dbReference type="ChEBI" id="CHEBI:46398"/>
        <dbReference type="ChEBI" id="CHEBI:61429"/>
    </reaction>
</comment>
<comment type="catalytic activity">
    <reaction evidence="1">
        <text>dGDP(out) + UTP(in) = dGDP(in) + UTP(out)</text>
        <dbReference type="Rhea" id="RHEA:73563"/>
        <dbReference type="ChEBI" id="CHEBI:46398"/>
        <dbReference type="ChEBI" id="CHEBI:58595"/>
    </reaction>
</comment>
<comment type="catalytic activity">
    <reaction evidence="1">
        <text>ITP(out) + UTP(in) = ITP(in) + UTP(out)</text>
        <dbReference type="Rhea" id="RHEA:73567"/>
        <dbReference type="ChEBI" id="CHEBI:46398"/>
        <dbReference type="ChEBI" id="CHEBI:61402"/>
    </reaction>
</comment>
<comment type="subcellular location">
    <subcellularLocation>
        <location evidence="5">Mitochondrion inner membrane</location>
        <topology evidence="2">Multi-pass membrane protein</topology>
    </subcellularLocation>
</comment>
<comment type="similarity">
    <text evidence="4">Belongs to the mitochondrial carrier (TC 2.A.29) family.</text>
</comment>
<comment type="sequence caution" evidence="4">
    <conflict type="frameshift">
        <sequence resource="EMBL-CDS" id="BAB30846"/>
    </conflict>
</comment>
<organism>
    <name type="scientific">Mus musculus</name>
    <name type="common">Mouse</name>
    <dbReference type="NCBI Taxonomy" id="10090"/>
    <lineage>
        <taxon>Eukaryota</taxon>
        <taxon>Metazoa</taxon>
        <taxon>Chordata</taxon>
        <taxon>Craniata</taxon>
        <taxon>Vertebrata</taxon>
        <taxon>Euteleostomi</taxon>
        <taxon>Mammalia</taxon>
        <taxon>Eutheria</taxon>
        <taxon>Euarchontoglires</taxon>
        <taxon>Glires</taxon>
        <taxon>Rodentia</taxon>
        <taxon>Myomorpha</taxon>
        <taxon>Muroidea</taxon>
        <taxon>Muridae</taxon>
        <taxon>Murinae</taxon>
        <taxon>Mus</taxon>
        <taxon>Mus</taxon>
    </lineage>
</organism>
<evidence type="ECO:0000250" key="1">
    <source>
        <dbReference type="UniProtKB" id="Q9BSK2"/>
    </source>
</evidence>
<evidence type="ECO:0000255" key="2"/>
<evidence type="ECO:0000269" key="3">
    <source>
    </source>
</evidence>
<evidence type="ECO:0000305" key="4"/>
<evidence type="ECO:0000305" key="5">
    <source>
    </source>
</evidence>
<proteinExistence type="evidence at transcript level"/>
<protein>
    <recommendedName>
        <fullName>Solute carrier family 25 member 33</fullName>
    </recommendedName>
</protein>
<keyword id="KW-0472">Membrane</keyword>
<keyword id="KW-0496">Mitochondrion</keyword>
<keyword id="KW-0999">Mitochondrion inner membrane</keyword>
<keyword id="KW-1185">Reference proteome</keyword>
<keyword id="KW-0677">Repeat</keyword>
<keyword id="KW-0812">Transmembrane</keyword>
<keyword id="KW-1133">Transmembrane helix</keyword>
<keyword id="KW-0813">Transport</keyword>
<accession>Q3TZX3</accession>
<accession>Q921P8</accession>
<accession>Q9CYJ1</accession>
<name>S2533_MOUSE</name>
<sequence length="320" mass="35064">MATGTQQKENTLLHLFAGGCGGTVGAIFTCPLEVIKTRLQSSRLALRTVYYPQVHLGTISGAGMVRPTSVTPGLLQVLKSILEKEGPKSLFRGLGPNLVGVAPSRAVYFACYSKAKEQFNGIFVPNSNTVHILSAGSAAFVTNTLMNPIWMVKTRMQLERKVRGCKQMNTLQCARRVYQTEGVRGFYRGLTASYAGISETIICFAIYESLKKCLKDAPIVSSTDGAEKSSSGFFGLMAAAAVSKGCASCIAYPHEVIRTRLREEGSKYRSFVQTARLVFREEGYLAFYRGLFAQLIRQIPNTAIVLSTYEFIVYLLGERA</sequence>
<dbReference type="EMBL" id="AK017628">
    <property type="protein sequence ID" value="BAB30846.1"/>
    <property type="status" value="ALT_FRAME"/>
    <property type="molecule type" value="mRNA"/>
</dbReference>
<dbReference type="EMBL" id="AK157423">
    <property type="protein sequence ID" value="BAE34084.1"/>
    <property type="molecule type" value="mRNA"/>
</dbReference>
<dbReference type="EMBL" id="AL626808">
    <property type="status" value="NOT_ANNOTATED_CDS"/>
    <property type="molecule type" value="Genomic_DNA"/>
</dbReference>
<dbReference type="EMBL" id="BC011293">
    <property type="protein sequence ID" value="AAH11293.1"/>
    <property type="molecule type" value="mRNA"/>
</dbReference>
<dbReference type="CCDS" id="CCDS38976.1"/>
<dbReference type="RefSeq" id="NP_081736.2">
    <property type="nucleotide sequence ID" value="NM_027460.2"/>
</dbReference>
<dbReference type="SMR" id="Q3TZX3"/>
<dbReference type="BioGRID" id="214130">
    <property type="interactions" value="4"/>
</dbReference>
<dbReference type="FunCoup" id="Q3TZX3">
    <property type="interactions" value="1826"/>
</dbReference>
<dbReference type="STRING" id="10090.ENSMUSP00000101311"/>
<dbReference type="GlyGen" id="Q3TZX3">
    <property type="glycosylation" value="1 site"/>
</dbReference>
<dbReference type="PhosphoSitePlus" id="Q3TZX3"/>
<dbReference type="SwissPalm" id="Q3TZX3"/>
<dbReference type="PaxDb" id="10090-ENSMUSP00000101311"/>
<dbReference type="PeptideAtlas" id="Q3TZX3"/>
<dbReference type="ProteomicsDB" id="260763"/>
<dbReference type="Pumba" id="Q3TZX3"/>
<dbReference type="Antibodypedia" id="53479">
    <property type="antibodies" value="67 antibodies from 18 providers"/>
</dbReference>
<dbReference type="DNASU" id="70556"/>
<dbReference type="Ensembl" id="ENSMUST00000105686.3">
    <property type="protein sequence ID" value="ENSMUSP00000101311.3"/>
    <property type="gene ID" value="ENSMUSG00000028982.10"/>
</dbReference>
<dbReference type="GeneID" id="70556"/>
<dbReference type="KEGG" id="mmu:70556"/>
<dbReference type="UCSC" id="uc008vxe.1">
    <property type="organism name" value="mouse"/>
</dbReference>
<dbReference type="AGR" id="MGI:1917806"/>
<dbReference type="CTD" id="84275"/>
<dbReference type="MGI" id="MGI:1917806">
    <property type="gene designation" value="Slc25a33"/>
</dbReference>
<dbReference type="VEuPathDB" id="HostDB:ENSMUSG00000028982"/>
<dbReference type="eggNOG" id="KOG0757">
    <property type="taxonomic scope" value="Eukaryota"/>
</dbReference>
<dbReference type="GeneTree" id="ENSGT00940000158954"/>
<dbReference type="HOGENOM" id="CLU_015166_6_0_1"/>
<dbReference type="InParanoid" id="Q3TZX3"/>
<dbReference type="OMA" id="AFYNGMG"/>
<dbReference type="OrthoDB" id="269120at2759"/>
<dbReference type="PhylomeDB" id="Q3TZX3"/>
<dbReference type="TreeFam" id="TF314220"/>
<dbReference type="BioGRID-ORCS" id="70556">
    <property type="hits" value="3 hits in 78 CRISPR screens"/>
</dbReference>
<dbReference type="PRO" id="PR:Q3TZX3"/>
<dbReference type="Proteomes" id="UP000000589">
    <property type="component" value="Chromosome 4"/>
</dbReference>
<dbReference type="RNAct" id="Q3TZX3">
    <property type="molecule type" value="protein"/>
</dbReference>
<dbReference type="Bgee" id="ENSMUSG00000028982">
    <property type="expression patterns" value="Expressed in gastrula and 249 other cell types or tissues"/>
</dbReference>
<dbReference type="GO" id="GO:0005743">
    <property type="term" value="C:mitochondrial inner membrane"/>
    <property type="evidence" value="ECO:0007669"/>
    <property type="project" value="UniProtKB-SubCell"/>
</dbReference>
<dbReference type="GO" id="GO:0031966">
    <property type="term" value="C:mitochondrial membrane"/>
    <property type="evidence" value="ECO:0000314"/>
    <property type="project" value="UniProtKB"/>
</dbReference>
<dbReference type="GO" id="GO:0005739">
    <property type="term" value="C:mitochondrion"/>
    <property type="evidence" value="ECO:0007005"/>
    <property type="project" value="MGI"/>
</dbReference>
<dbReference type="GO" id="GO:0015218">
    <property type="term" value="F:pyrimidine nucleotide transmembrane transporter activity"/>
    <property type="evidence" value="ECO:0000250"/>
    <property type="project" value="UniProtKB"/>
</dbReference>
<dbReference type="GO" id="GO:0032869">
    <property type="term" value="P:cellular response to insulin stimulus"/>
    <property type="evidence" value="ECO:0000250"/>
    <property type="project" value="UniProtKB"/>
</dbReference>
<dbReference type="GO" id="GO:1990314">
    <property type="term" value="P:cellular response to insulin-like growth factor stimulus"/>
    <property type="evidence" value="ECO:0000250"/>
    <property type="project" value="UniProtKB"/>
</dbReference>
<dbReference type="GO" id="GO:0031930">
    <property type="term" value="P:mitochondria-nucleus signaling pathway"/>
    <property type="evidence" value="ECO:0000314"/>
    <property type="project" value="UniProtKB"/>
</dbReference>
<dbReference type="GO" id="GO:0000002">
    <property type="term" value="P:mitochondrial genome maintenance"/>
    <property type="evidence" value="ECO:0000250"/>
    <property type="project" value="UniProtKB"/>
</dbReference>
<dbReference type="GO" id="GO:0034551">
    <property type="term" value="P:mitochondrial respiratory chain complex III assembly"/>
    <property type="evidence" value="ECO:0000250"/>
    <property type="project" value="UniProtKB"/>
</dbReference>
<dbReference type="GO" id="GO:0006390">
    <property type="term" value="P:mitochondrial transcription"/>
    <property type="evidence" value="ECO:0000250"/>
    <property type="project" value="UniProtKB"/>
</dbReference>
<dbReference type="GO" id="GO:0007005">
    <property type="term" value="P:mitochondrion organization"/>
    <property type="evidence" value="ECO:0000250"/>
    <property type="project" value="UniProtKB"/>
</dbReference>
<dbReference type="GO" id="GO:0030307">
    <property type="term" value="P:positive regulation of cell growth"/>
    <property type="evidence" value="ECO:0000314"/>
    <property type="project" value="UniProtKB"/>
</dbReference>
<dbReference type="GO" id="GO:0008284">
    <property type="term" value="P:positive regulation of cell population proliferation"/>
    <property type="evidence" value="ECO:0000250"/>
    <property type="project" value="UniProtKB"/>
</dbReference>
<dbReference type="GO" id="GO:1990519">
    <property type="term" value="P:pyrimidine nucleotide import into mitochondrion"/>
    <property type="evidence" value="ECO:0000315"/>
    <property type="project" value="UniProtKB"/>
</dbReference>
<dbReference type="GO" id="GO:0006864">
    <property type="term" value="P:pyrimidine nucleotide transport"/>
    <property type="evidence" value="ECO:0000250"/>
    <property type="project" value="UniProtKB"/>
</dbReference>
<dbReference type="GO" id="GO:0051881">
    <property type="term" value="P:regulation of mitochondrial membrane potential"/>
    <property type="evidence" value="ECO:0000250"/>
    <property type="project" value="UniProtKB"/>
</dbReference>
<dbReference type="GO" id="GO:0002082">
    <property type="term" value="P:regulation of oxidative phosphorylation"/>
    <property type="evidence" value="ECO:0000250"/>
    <property type="project" value="UniProtKB"/>
</dbReference>
<dbReference type="GO" id="GO:1903426">
    <property type="term" value="P:regulation of reactive oxygen species biosynthetic process"/>
    <property type="evidence" value="ECO:0000250"/>
    <property type="project" value="UniProtKB"/>
</dbReference>
<dbReference type="FunFam" id="1.50.40.10:FF:000260">
    <property type="entry name" value="Solute carrier family 25 member 33"/>
    <property type="match status" value="1"/>
</dbReference>
<dbReference type="FunFam" id="1.50.40.10:FF:000354">
    <property type="entry name" value="Solute carrier family 25 member 33"/>
    <property type="match status" value="1"/>
</dbReference>
<dbReference type="Gene3D" id="1.50.40.10">
    <property type="entry name" value="Mitochondrial carrier domain"/>
    <property type="match status" value="2"/>
</dbReference>
<dbReference type="InterPro" id="IPR018108">
    <property type="entry name" value="Mitochondrial_sb/sol_carrier"/>
</dbReference>
<dbReference type="InterPro" id="IPR023395">
    <property type="entry name" value="Mt_carrier_dom_sf"/>
</dbReference>
<dbReference type="InterPro" id="IPR049562">
    <property type="entry name" value="SLC25A33/36-like"/>
</dbReference>
<dbReference type="PANTHER" id="PTHR45829">
    <property type="entry name" value="MITOCHONDRIAL CARRIER PROTEIN RIM2"/>
    <property type="match status" value="1"/>
</dbReference>
<dbReference type="PANTHER" id="PTHR45829:SF5">
    <property type="entry name" value="SOLUTE CARRIER FAMILY 25 MEMBER 33"/>
    <property type="match status" value="1"/>
</dbReference>
<dbReference type="Pfam" id="PF00153">
    <property type="entry name" value="Mito_carr"/>
    <property type="match status" value="3"/>
</dbReference>
<dbReference type="SUPFAM" id="SSF103506">
    <property type="entry name" value="Mitochondrial carrier"/>
    <property type="match status" value="1"/>
</dbReference>
<dbReference type="PROSITE" id="PS50920">
    <property type="entry name" value="SOLCAR"/>
    <property type="match status" value="3"/>
</dbReference>
<feature type="chain" id="PRO_0000291786" description="Solute carrier family 25 member 33">
    <location>
        <begin position="1"/>
        <end position="320"/>
    </location>
</feature>
<feature type="transmembrane region" description="Helical; Name=1" evidence="2">
    <location>
        <begin position="12"/>
        <end position="32"/>
    </location>
</feature>
<feature type="transmembrane region" description="Helical; Name=2" evidence="2">
    <location>
        <begin position="49"/>
        <end position="65"/>
    </location>
</feature>
<feature type="transmembrane region" description="Helical; Name=3" evidence="2">
    <location>
        <begin position="121"/>
        <end position="141"/>
    </location>
</feature>
<feature type="transmembrane region" description="Helical; Name=4" evidence="2">
    <location>
        <begin position="190"/>
        <end position="210"/>
    </location>
</feature>
<feature type="transmembrane region" description="Helical; Name=5" evidence="2">
    <location>
        <begin position="233"/>
        <end position="253"/>
    </location>
</feature>
<feature type="transmembrane region" description="Helical; Name=6" evidence="2">
    <location>
        <begin position="298"/>
        <end position="318"/>
    </location>
</feature>
<feature type="repeat" description="Solcar 1">
    <location>
        <begin position="9"/>
        <end position="118"/>
    </location>
</feature>
<feature type="repeat" description="Solcar 2">
    <location>
        <begin position="126"/>
        <end position="213"/>
    </location>
</feature>
<feature type="repeat" description="Solcar 3">
    <location>
        <begin position="231"/>
        <end position="315"/>
    </location>
</feature>
<feature type="sequence conflict" description="In Ref. 1; BAB30846." evidence="4" ref="1">
    <original>P</original>
    <variation>H</variation>
    <location>
        <position position="31"/>
    </location>
</feature>
<feature type="sequence conflict" description="In Ref. 3; AAH11293." evidence="4" ref="3">
    <original>I</original>
    <variation>V</variation>
    <location>
        <position position="122"/>
    </location>
</feature>
<feature type="sequence conflict" description="In Ref. 1; BAB30846." evidence="4" ref="1">
    <original>T</original>
    <variation>N</variation>
    <location>
        <position position="129"/>
    </location>
</feature>
<feature type="sequence conflict" description="In Ref. 1; BAB30846." evidence="4" ref="1">
    <original>T</original>
    <variation>K</variation>
    <location>
        <position position="154"/>
    </location>
</feature>
<feature type="sequence conflict" description="In Ref. 1; BAB30846." evidence="4" ref="1">
    <original>G</original>
    <variation>V</variation>
    <location>
        <position position="189"/>
    </location>
</feature>
<feature type="sequence conflict" description="In Ref. 1; BAB30846." evidence="4" ref="1">
    <original>A</original>
    <variation>T</variation>
    <location>
        <position position="293"/>
    </location>
</feature>